<sequence length="238" mass="25281">MSDVSYREITAKGLWSNNPALVQLLGLCPLLAVSSSVVNALGLGIATLLVLVISNSFVSLIRRQVSDAVRLPAFVMIIASAVTCTELLMKAFTYELYQILGLFIPLIVTNCAVLGRADAFASKNKLIPSAVDGFMMGLGFMLVLVAVGAVRELLGTGHLFGDMHLIFGEGARSWQLNIFGADYPNVIFALLPPGAFIVVGMLIAAKNSIDAHLKKRADARKTAVSTGSKRVRTTGAVS</sequence>
<gene>
    <name evidence="1" type="primary">rnfE</name>
    <name type="ordered locus">CJA_1003</name>
</gene>
<proteinExistence type="inferred from homology"/>
<dbReference type="EC" id="7.-.-.-" evidence="1"/>
<dbReference type="EMBL" id="CP000934">
    <property type="protein sequence ID" value="ACE86013.1"/>
    <property type="molecule type" value="Genomic_DNA"/>
</dbReference>
<dbReference type="RefSeq" id="WP_012486651.1">
    <property type="nucleotide sequence ID" value="NC_010995.1"/>
</dbReference>
<dbReference type="SMR" id="B3PB31"/>
<dbReference type="STRING" id="498211.CJA_1003"/>
<dbReference type="KEGG" id="cja:CJA_1003"/>
<dbReference type="eggNOG" id="COG4660">
    <property type="taxonomic scope" value="Bacteria"/>
</dbReference>
<dbReference type="HOGENOM" id="CLU_046659_1_0_6"/>
<dbReference type="OrthoDB" id="9782945at2"/>
<dbReference type="Proteomes" id="UP000001036">
    <property type="component" value="Chromosome"/>
</dbReference>
<dbReference type="GO" id="GO:0005886">
    <property type="term" value="C:plasma membrane"/>
    <property type="evidence" value="ECO:0007669"/>
    <property type="project" value="UniProtKB-SubCell"/>
</dbReference>
<dbReference type="GO" id="GO:0022900">
    <property type="term" value="P:electron transport chain"/>
    <property type="evidence" value="ECO:0007669"/>
    <property type="project" value="UniProtKB-UniRule"/>
</dbReference>
<dbReference type="HAMAP" id="MF_00478">
    <property type="entry name" value="RsxE_RnfE"/>
    <property type="match status" value="1"/>
</dbReference>
<dbReference type="InterPro" id="IPR003667">
    <property type="entry name" value="NqrDE/RnfAE"/>
</dbReference>
<dbReference type="InterPro" id="IPR010968">
    <property type="entry name" value="RnfE"/>
</dbReference>
<dbReference type="NCBIfam" id="NF009070">
    <property type="entry name" value="PRK12405.1"/>
    <property type="match status" value="1"/>
</dbReference>
<dbReference type="NCBIfam" id="TIGR01948">
    <property type="entry name" value="rnfE"/>
    <property type="match status" value="1"/>
</dbReference>
<dbReference type="PANTHER" id="PTHR30586">
    <property type="entry name" value="ELECTRON TRANSPORT COMPLEX PROTEIN RNFE"/>
    <property type="match status" value="1"/>
</dbReference>
<dbReference type="PANTHER" id="PTHR30586:SF0">
    <property type="entry name" value="ION-TRANSLOCATING OXIDOREDUCTASE COMPLEX SUBUNIT E"/>
    <property type="match status" value="1"/>
</dbReference>
<dbReference type="Pfam" id="PF02508">
    <property type="entry name" value="Rnf-Nqr"/>
    <property type="match status" value="1"/>
</dbReference>
<dbReference type="PIRSF" id="PIRSF006102">
    <property type="entry name" value="NQR_DE"/>
    <property type="match status" value="1"/>
</dbReference>
<keyword id="KW-0997">Cell inner membrane</keyword>
<keyword id="KW-1003">Cell membrane</keyword>
<keyword id="KW-0249">Electron transport</keyword>
<keyword id="KW-0472">Membrane</keyword>
<keyword id="KW-1185">Reference proteome</keyword>
<keyword id="KW-1278">Translocase</keyword>
<keyword id="KW-0812">Transmembrane</keyword>
<keyword id="KW-1133">Transmembrane helix</keyword>
<keyword id="KW-0813">Transport</keyword>
<feature type="chain" id="PRO_1000125845" description="Ion-translocating oxidoreductase complex subunit E">
    <location>
        <begin position="1"/>
        <end position="238"/>
    </location>
</feature>
<feature type="transmembrane region" description="Helical" evidence="1">
    <location>
        <begin position="20"/>
        <end position="40"/>
    </location>
</feature>
<feature type="transmembrane region" description="Helical" evidence="1">
    <location>
        <begin position="41"/>
        <end position="61"/>
    </location>
</feature>
<feature type="transmembrane region" description="Helical" evidence="1">
    <location>
        <begin position="72"/>
        <end position="92"/>
    </location>
</feature>
<feature type="transmembrane region" description="Helical" evidence="1">
    <location>
        <begin position="95"/>
        <end position="115"/>
    </location>
</feature>
<feature type="transmembrane region" description="Helical" evidence="1">
    <location>
        <begin position="130"/>
        <end position="150"/>
    </location>
</feature>
<feature type="transmembrane region" description="Helical" evidence="1">
    <location>
        <begin position="185"/>
        <end position="205"/>
    </location>
</feature>
<name>RNFE_CELJU</name>
<comment type="function">
    <text evidence="1">Part of a membrane-bound complex that couples electron transfer with translocation of ions across the membrane.</text>
</comment>
<comment type="subunit">
    <text evidence="1">The complex is composed of six subunits: RnfA, RnfB, RnfC, RnfD, RnfE and RnfG.</text>
</comment>
<comment type="subcellular location">
    <subcellularLocation>
        <location evidence="1">Cell inner membrane</location>
        <topology evidence="1">Multi-pass membrane protein</topology>
    </subcellularLocation>
</comment>
<comment type="similarity">
    <text evidence="1">Belongs to the NqrDE/RnfAE family.</text>
</comment>
<evidence type="ECO:0000255" key="1">
    <source>
        <dbReference type="HAMAP-Rule" id="MF_00478"/>
    </source>
</evidence>
<protein>
    <recommendedName>
        <fullName evidence="1">Ion-translocating oxidoreductase complex subunit E</fullName>
        <ecNumber evidence="1">7.-.-.-</ecNumber>
    </recommendedName>
    <alternativeName>
        <fullName evidence="1">Rnf electron transport complex subunit E</fullName>
    </alternativeName>
</protein>
<organism>
    <name type="scientific">Cellvibrio japonicus (strain Ueda107)</name>
    <name type="common">Pseudomonas fluorescens subsp. cellulosa</name>
    <dbReference type="NCBI Taxonomy" id="498211"/>
    <lineage>
        <taxon>Bacteria</taxon>
        <taxon>Pseudomonadati</taxon>
        <taxon>Pseudomonadota</taxon>
        <taxon>Gammaproteobacteria</taxon>
        <taxon>Cellvibrionales</taxon>
        <taxon>Cellvibrionaceae</taxon>
        <taxon>Cellvibrio</taxon>
    </lineage>
</organism>
<reference key="1">
    <citation type="journal article" date="2008" name="J. Bacteriol.">
        <title>Insights into plant cell wall degradation from the genome sequence of the soil bacterium Cellvibrio japonicus.</title>
        <authorList>
            <person name="DeBoy R.T."/>
            <person name="Mongodin E.F."/>
            <person name="Fouts D.E."/>
            <person name="Tailford L.E."/>
            <person name="Khouri H."/>
            <person name="Emerson J.B."/>
            <person name="Mohamoud Y."/>
            <person name="Watkins K."/>
            <person name="Henrissat B."/>
            <person name="Gilbert H.J."/>
            <person name="Nelson K.E."/>
        </authorList>
    </citation>
    <scope>NUCLEOTIDE SEQUENCE [LARGE SCALE GENOMIC DNA]</scope>
    <source>
        <strain>Ueda107</strain>
    </source>
</reference>
<accession>B3PB31</accession>